<comment type="catalytic activity">
    <reaction evidence="1">
        <text>(2R)-3-phosphoglycerate + ATP = (2R)-3-phospho-glyceroyl phosphate + ADP</text>
        <dbReference type="Rhea" id="RHEA:14801"/>
        <dbReference type="ChEBI" id="CHEBI:30616"/>
        <dbReference type="ChEBI" id="CHEBI:57604"/>
        <dbReference type="ChEBI" id="CHEBI:58272"/>
        <dbReference type="ChEBI" id="CHEBI:456216"/>
        <dbReference type="EC" id="2.7.2.3"/>
    </reaction>
</comment>
<comment type="pathway">
    <text evidence="1">Carbohydrate degradation; glycolysis; pyruvate from D-glyceraldehyde 3-phosphate: step 2/5.</text>
</comment>
<comment type="subunit">
    <text evidence="1">Monomer.</text>
</comment>
<comment type="subcellular location">
    <subcellularLocation>
        <location evidence="1">Cytoplasm</location>
    </subcellularLocation>
</comment>
<comment type="similarity">
    <text evidence="1">Belongs to the phosphoglycerate kinase family.</text>
</comment>
<reference key="1">
    <citation type="submission" date="2007-02" db="EMBL/GenBank/DDBJ databases">
        <title>Complete sequence of chromosome of Shewanella baltica OS155.</title>
        <authorList>
            <consortium name="US DOE Joint Genome Institute"/>
            <person name="Copeland A."/>
            <person name="Lucas S."/>
            <person name="Lapidus A."/>
            <person name="Barry K."/>
            <person name="Detter J.C."/>
            <person name="Glavina del Rio T."/>
            <person name="Hammon N."/>
            <person name="Israni S."/>
            <person name="Dalin E."/>
            <person name="Tice H."/>
            <person name="Pitluck S."/>
            <person name="Sims D.R."/>
            <person name="Brettin T."/>
            <person name="Bruce D."/>
            <person name="Han C."/>
            <person name="Tapia R."/>
            <person name="Brainard J."/>
            <person name="Schmutz J."/>
            <person name="Larimer F."/>
            <person name="Land M."/>
            <person name="Hauser L."/>
            <person name="Kyrpides N."/>
            <person name="Mikhailova N."/>
            <person name="Brettar I."/>
            <person name="Klappenbach J."/>
            <person name="Konstantinidis K."/>
            <person name="Rodrigues J."/>
            <person name="Tiedje J."/>
            <person name="Richardson P."/>
        </authorList>
    </citation>
    <scope>NUCLEOTIDE SEQUENCE [LARGE SCALE GENOMIC DNA]</scope>
    <source>
        <strain>OS155 / ATCC BAA-1091</strain>
    </source>
</reference>
<proteinExistence type="inferred from homology"/>
<gene>
    <name evidence="1" type="primary">pgk</name>
    <name type="ordered locus">Sbal_0829</name>
</gene>
<dbReference type="EC" id="2.7.2.3" evidence="1"/>
<dbReference type="EMBL" id="CP000563">
    <property type="protein sequence ID" value="ABN60354.1"/>
    <property type="molecule type" value="Genomic_DNA"/>
</dbReference>
<dbReference type="RefSeq" id="WP_011845921.1">
    <property type="nucleotide sequence ID" value="NC_009052.1"/>
</dbReference>
<dbReference type="SMR" id="A3D0U1"/>
<dbReference type="STRING" id="325240.Sbal_0829"/>
<dbReference type="KEGG" id="sbl:Sbal_0829"/>
<dbReference type="HOGENOM" id="CLU_025427_0_2_6"/>
<dbReference type="OrthoDB" id="9808460at2"/>
<dbReference type="UniPathway" id="UPA00109">
    <property type="reaction ID" value="UER00185"/>
</dbReference>
<dbReference type="Proteomes" id="UP000001557">
    <property type="component" value="Chromosome"/>
</dbReference>
<dbReference type="GO" id="GO:0005829">
    <property type="term" value="C:cytosol"/>
    <property type="evidence" value="ECO:0007669"/>
    <property type="project" value="TreeGrafter"/>
</dbReference>
<dbReference type="GO" id="GO:0043531">
    <property type="term" value="F:ADP binding"/>
    <property type="evidence" value="ECO:0007669"/>
    <property type="project" value="TreeGrafter"/>
</dbReference>
<dbReference type="GO" id="GO:0005524">
    <property type="term" value="F:ATP binding"/>
    <property type="evidence" value="ECO:0007669"/>
    <property type="project" value="UniProtKB-KW"/>
</dbReference>
<dbReference type="GO" id="GO:0004618">
    <property type="term" value="F:phosphoglycerate kinase activity"/>
    <property type="evidence" value="ECO:0007669"/>
    <property type="project" value="UniProtKB-UniRule"/>
</dbReference>
<dbReference type="GO" id="GO:0006094">
    <property type="term" value="P:gluconeogenesis"/>
    <property type="evidence" value="ECO:0007669"/>
    <property type="project" value="TreeGrafter"/>
</dbReference>
<dbReference type="GO" id="GO:0006096">
    <property type="term" value="P:glycolytic process"/>
    <property type="evidence" value="ECO:0007669"/>
    <property type="project" value="UniProtKB-UniRule"/>
</dbReference>
<dbReference type="FunFam" id="3.40.50.1260:FF:000001">
    <property type="entry name" value="Phosphoglycerate kinase"/>
    <property type="match status" value="1"/>
</dbReference>
<dbReference type="FunFam" id="3.40.50.1260:FF:000002">
    <property type="entry name" value="Phosphoglycerate kinase"/>
    <property type="match status" value="1"/>
</dbReference>
<dbReference type="Gene3D" id="3.40.50.1260">
    <property type="entry name" value="Phosphoglycerate kinase, N-terminal domain"/>
    <property type="match status" value="2"/>
</dbReference>
<dbReference type="HAMAP" id="MF_00145">
    <property type="entry name" value="Phosphoglyc_kinase"/>
    <property type="match status" value="1"/>
</dbReference>
<dbReference type="InterPro" id="IPR001576">
    <property type="entry name" value="Phosphoglycerate_kinase"/>
</dbReference>
<dbReference type="InterPro" id="IPR015911">
    <property type="entry name" value="Phosphoglycerate_kinase_CS"/>
</dbReference>
<dbReference type="InterPro" id="IPR015824">
    <property type="entry name" value="Phosphoglycerate_kinase_N"/>
</dbReference>
<dbReference type="InterPro" id="IPR036043">
    <property type="entry name" value="Phosphoglycerate_kinase_sf"/>
</dbReference>
<dbReference type="PANTHER" id="PTHR11406">
    <property type="entry name" value="PHOSPHOGLYCERATE KINASE"/>
    <property type="match status" value="1"/>
</dbReference>
<dbReference type="PANTHER" id="PTHR11406:SF23">
    <property type="entry name" value="PHOSPHOGLYCERATE KINASE 1, CHLOROPLASTIC-RELATED"/>
    <property type="match status" value="1"/>
</dbReference>
<dbReference type="Pfam" id="PF00162">
    <property type="entry name" value="PGK"/>
    <property type="match status" value="1"/>
</dbReference>
<dbReference type="PIRSF" id="PIRSF000724">
    <property type="entry name" value="Pgk"/>
    <property type="match status" value="1"/>
</dbReference>
<dbReference type="PRINTS" id="PR00477">
    <property type="entry name" value="PHGLYCKINASE"/>
</dbReference>
<dbReference type="SUPFAM" id="SSF53748">
    <property type="entry name" value="Phosphoglycerate kinase"/>
    <property type="match status" value="1"/>
</dbReference>
<dbReference type="PROSITE" id="PS00111">
    <property type="entry name" value="PGLYCERATE_KINASE"/>
    <property type="match status" value="1"/>
</dbReference>
<name>PGK_SHEB5</name>
<evidence type="ECO:0000255" key="1">
    <source>
        <dbReference type="HAMAP-Rule" id="MF_00145"/>
    </source>
</evidence>
<feature type="chain" id="PRO_1000058054" description="Phosphoglycerate kinase">
    <location>
        <begin position="1"/>
        <end position="391"/>
    </location>
</feature>
<feature type="binding site" evidence="1">
    <location>
        <begin position="21"/>
        <end position="23"/>
    </location>
    <ligand>
        <name>substrate</name>
    </ligand>
</feature>
<feature type="binding site" evidence="1">
    <location>
        <position position="36"/>
    </location>
    <ligand>
        <name>substrate</name>
    </ligand>
</feature>
<feature type="binding site" evidence="1">
    <location>
        <begin position="59"/>
        <end position="62"/>
    </location>
    <ligand>
        <name>substrate</name>
    </ligand>
</feature>
<feature type="binding site" evidence="1">
    <location>
        <position position="113"/>
    </location>
    <ligand>
        <name>substrate</name>
    </ligand>
</feature>
<feature type="binding site" evidence="1">
    <location>
        <position position="146"/>
    </location>
    <ligand>
        <name>substrate</name>
    </ligand>
</feature>
<feature type="binding site" evidence="1">
    <location>
        <position position="197"/>
    </location>
    <ligand>
        <name>ATP</name>
        <dbReference type="ChEBI" id="CHEBI:30616"/>
    </ligand>
</feature>
<feature type="binding site" evidence="1">
    <location>
        <position position="319"/>
    </location>
    <ligand>
        <name>ATP</name>
        <dbReference type="ChEBI" id="CHEBI:30616"/>
    </ligand>
</feature>
<feature type="binding site" evidence="1">
    <location>
        <begin position="345"/>
        <end position="348"/>
    </location>
    <ligand>
        <name>ATP</name>
        <dbReference type="ChEBI" id="CHEBI:30616"/>
    </ligand>
</feature>
<organism>
    <name type="scientific">Shewanella baltica (strain OS155 / ATCC BAA-1091)</name>
    <dbReference type="NCBI Taxonomy" id="325240"/>
    <lineage>
        <taxon>Bacteria</taxon>
        <taxon>Pseudomonadati</taxon>
        <taxon>Pseudomonadota</taxon>
        <taxon>Gammaproteobacteria</taxon>
        <taxon>Alteromonadales</taxon>
        <taxon>Shewanellaceae</taxon>
        <taxon>Shewanella</taxon>
    </lineage>
</organism>
<accession>A3D0U1</accession>
<keyword id="KW-0067">ATP-binding</keyword>
<keyword id="KW-0963">Cytoplasm</keyword>
<keyword id="KW-0324">Glycolysis</keyword>
<keyword id="KW-0418">Kinase</keyword>
<keyword id="KW-0547">Nucleotide-binding</keyword>
<keyword id="KW-1185">Reference proteome</keyword>
<keyword id="KW-0808">Transferase</keyword>
<protein>
    <recommendedName>
        <fullName evidence="1">Phosphoglycerate kinase</fullName>
        <ecNumber evidence="1">2.7.2.3</ecNumber>
    </recommendedName>
</protein>
<sequence>MAIINMSDLDLQGKRVLIREDLNVPVSNGVVTSDARLRASLPTIELALANGAAVMVMSHLGRPTEGEYNPEYSMQPVVDYLAKALSCPVRLATDYLDGVDVVVGEVVVFENVRFNVGEGKNNEALSKKMAALCDVYVMDAFGTAHRAQASTHGVGMFAPIACAGPLLAQELDALGKALDNPARPMVAIVGGSKVSTKLTVLESLSGIVDQLVVGGGIANTFIAAAGYNVGKSLYEADLIDEAKRLVANAKSRGADIPVPTDVVVAGEFSPIAAATLKSVSEVADGEMIFDIGPDSAEALAKIIASAGTIVWNGPVGVFEFDQFGEGTKRIAQAIADSKAFSIAGGGDTLAAVDKYGIADKVSYISTGGGAFLEFLEGKELPAVAMLEKRGV</sequence>